<accession>A8XEG9</accession>
<organism>
    <name type="scientific">Caenorhabditis briggsae</name>
    <dbReference type="NCBI Taxonomy" id="6238"/>
    <lineage>
        <taxon>Eukaryota</taxon>
        <taxon>Metazoa</taxon>
        <taxon>Ecdysozoa</taxon>
        <taxon>Nematoda</taxon>
        <taxon>Chromadorea</taxon>
        <taxon>Rhabditida</taxon>
        <taxon>Rhabditina</taxon>
        <taxon>Rhabditomorpha</taxon>
        <taxon>Rhabditoidea</taxon>
        <taxon>Rhabditidae</taxon>
        <taxon>Peloderinae</taxon>
        <taxon>Caenorhabditis</taxon>
    </lineage>
</organism>
<sequence>MDSDDDGDRRRDKFARERRDDDSYRRSGGGGGGYSRYDNKRPAGRREDYQVKRSRGDEGDDGFDPVRGDRNGNGAEPSSENSIYSGPLLPFKRFLTNQEDDISEEDAIKKYNEYKNEHRKFQLDRFFRAHKDEEWFRLKYKPEEAKKVKEVQLENVQKRLQIFNELKEQGQFDKFTLDFEDAEAILRMLDSVVVKLENGSEDDLKAVLAQKLDDESLADVKKENKDAAEKVEDQVKDEVKEEPNEEQEEGAIDDETDKASNKVNIHKTCSVFLRNIPPGLTYEELESTCKKYPGFLRLALTDGIAERRFYRRGWATFKRDVNIKEICWGLNAHRLRETDLNAIINRDITRRVRTNNGVAAHKQVALNDLKLAVKLTALYDKKLGLFNAADESESDREKDIRMGVDLVAASTNPLVKEIKSIVPKDTLNDISEEEAELLGVSNGGDSQSDKVRYERDDTILKALDLLIIYLRIVHSIDFYNHGHYAQEDSMPNRCGLIHVRGQPPSGASINTDENGDLIVPQKFINDFISGFNSRIDKGLIEKQYVSEEDMEKMGKKDGEKEVEAFIAINTVELAKDKWLCPLSGKKFKGPEFIRKHLQSKHEDKLEEARAEADFFNNYLADAQRPVDLEPKHMPHMSRDDHRGGGGDRGYGRERDDDRGPGGGRSSFGNGSYDRRPPFPPRHSLGGRGGGGRMFDDAPRRQPVSYRDLDAPDDIP</sequence>
<reference key="1">
    <citation type="journal article" date="2003" name="PLoS Biol.">
        <title>The genome sequence of Caenorhabditis briggsae: a platform for comparative genomics.</title>
        <authorList>
            <person name="Stein L.D."/>
            <person name="Bao Z."/>
            <person name="Blasiar D."/>
            <person name="Blumenthal T."/>
            <person name="Brent M.R."/>
            <person name="Chen N."/>
            <person name="Chinwalla A."/>
            <person name="Clarke L."/>
            <person name="Clee C."/>
            <person name="Coghlan A."/>
            <person name="Coulson A."/>
            <person name="D'Eustachio P."/>
            <person name="Fitch D.H.A."/>
            <person name="Fulton L.A."/>
            <person name="Fulton R.E."/>
            <person name="Griffiths-Jones S."/>
            <person name="Harris T.W."/>
            <person name="Hillier L.W."/>
            <person name="Kamath R."/>
            <person name="Kuwabara P.E."/>
            <person name="Mardis E.R."/>
            <person name="Marra M.A."/>
            <person name="Miner T.L."/>
            <person name="Minx P."/>
            <person name="Mullikin J.C."/>
            <person name="Plumb R.W."/>
            <person name="Rogers J."/>
            <person name="Schein J.E."/>
            <person name="Sohrmann M."/>
            <person name="Spieth J."/>
            <person name="Stajich J.E."/>
            <person name="Wei C."/>
            <person name="Willey D."/>
            <person name="Wilson R.K."/>
            <person name="Durbin R.M."/>
            <person name="Waterston R.H."/>
        </authorList>
    </citation>
    <scope>NUCLEOTIDE SEQUENCE [LARGE SCALE GENOMIC DNA]</scope>
    <source>
        <strain>AF16</strain>
    </source>
</reference>
<gene>
    <name type="ORF">CBG12064</name>
</gene>
<name>SRRT_CAEBR</name>
<protein>
    <recommendedName>
        <fullName>Serrate RNA effector molecule homolog</fullName>
    </recommendedName>
    <alternativeName>
        <fullName>Arsenite-resistance protein 2 homolog</fullName>
    </alternativeName>
</protein>
<dbReference type="EMBL" id="HE601540">
    <property type="protein sequence ID" value="CAP31104.1"/>
    <property type="molecule type" value="Genomic_DNA"/>
</dbReference>
<dbReference type="RefSeq" id="XP_002646350.1">
    <property type="nucleotide sequence ID" value="XM_002646304.1"/>
</dbReference>
<dbReference type="SMR" id="A8XEG9"/>
<dbReference type="FunCoup" id="A8XEG9">
    <property type="interactions" value="3137"/>
</dbReference>
<dbReference type="STRING" id="6238.A8XEG9"/>
<dbReference type="EnsemblMetazoa" id="CBG12064.1">
    <property type="protein sequence ID" value="CBG12064.1"/>
    <property type="gene ID" value="WBGene00033072"/>
</dbReference>
<dbReference type="GeneID" id="8588347"/>
<dbReference type="KEGG" id="cbr:CBG_12064"/>
<dbReference type="CTD" id="8588347"/>
<dbReference type="WormBase" id="CBG12064">
    <property type="protein sequence ID" value="CBP17383"/>
    <property type="gene ID" value="WBGene00033072"/>
</dbReference>
<dbReference type="eggNOG" id="KOG2295">
    <property type="taxonomic scope" value="Eukaryota"/>
</dbReference>
<dbReference type="HOGENOM" id="CLU_008560_1_1_1"/>
<dbReference type="InParanoid" id="A8XEG9"/>
<dbReference type="OMA" id="HLRMCEE"/>
<dbReference type="Proteomes" id="UP000008549">
    <property type="component" value="Unassembled WGS sequence"/>
</dbReference>
<dbReference type="GO" id="GO:0016604">
    <property type="term" value="C:nuclear body"/>
    <property type="evidence" value="ECO:0000318"/>
    <property type="project" value="GO_Central"/>
</dbReference>
<dbReference type="GO" id="GO:0005654">
    <property type="term" value="C:nucleoplasm"/>
    <property type="evidence" value="ECO:0000250"/>
    <property type="project" value="UniProtKB"/>
</dbReference>
<dbReference type="GO" id="GO:0031053">
    <property type="term" value="P:primary miRNA processing"/>
    <property type="evidence" value="ECO:0000250"/>
    <property type="project" value="UniProtKB"/>
</dbReference>
<dbReference type="Gene3D" id="3.30.70.330">
    <property type="match status" value="1"/>
</dbReference>
<dbReference type="InterPro" id="IPR012677">
    <property type="entry name" value="Nucleotide-bd_a/b_plait_sf"/>
</dbReference>
<dbReference type="InterPro" id="IPR039727">
    <property type="entry name" value="SE/Ars2"/>
</dbReference>
<dbReference type="InterPro" id="IPR007042">
    <property type="entry name" value="SERRATE/Ars2_C"/>
</dbReference>
<dbReference type="InterPro" id="IPR021933">
    <property type="entry name" value="SERRATE/Ars2_N"/>
</dbReference>
<dbReference type="PANTHER" id="PTHR13165">
    <property type="entry name" value="ARSENITE-RESISTANCE PROTEIN 2"/>
    <property type="match status" value="1"/>
</dbReference>
<dbReference type="PANTHER" id="PTHR13165:SF0">
    <property type="entry name" value="SERRATE RNA EFFECTOR MOLECULE HOMOLOG"/>
    <property type="match status" value="1"/>
</dbReference>
<dbReference type="Pfam" id="PF04959">
    <property type="entry name" value="ARS2"/>
    <property type="match status" value="1"/>
</dbReference>
<dbReference type="Pfam" id="PF12066">
    <property type="entry name" value="SERRATE_Ars2_N"/>
    <property type="match status" value="1"/>
</dbReference>
<evidence type="ECO:0000250" key="1"/>
<evidence type="ECO:0000256" key="2">
    <source>
        <dbReference type="SAM" id="MobiDB-lite"/>
    </source>
</evidence>
<evidence type="ECO:0000305" key="3"/>
<keyword id="KW-0539">Nucleus</keyword>
<keyword id="KW-1185">Reference proteome</keyword>
<keyword id="KW-0943">RNA-mediated gene silencing</keyword>
<feature type="chain" id="PRO_0000385227" description="Serrate RNA effector molecule homolog">
    <location>
        <begin position="1"/>
        <end position="715"/>
    </location>
</feature>
<feature type="region of interest" description="Disordered" evidence="2">
    <location>
        <begin position="1"/>
        <end position="87"/>
    </location>
</feature>
<feature type="region of interest" description="Disordered" evidence="2">
    <location>
        <begin position="223"/>
        <end position="259"/>
    </location>
</feature>
<feature type="region of interest" description="Disordered" evidence="2">
    <location>
        <begin position="629"/>
        <end position="715"/>
    </location>
</feature>
<feature type="compositionally biased region" description="Basic and acidic residues" evidence="2">
    <location>
        <begin position="7"/>
        <end position="25"/>
    </location>
</feature>
<feature type="compositionally biased region" description="Basic and acidic residues" evidence="2">
    <location>
        <begin position="37"/>
        <end position="57"/>
    </location>
</feature>
<feature type="compositionally biased region" description="Basic and acidic residues" evidence="2">
    <location>
        <begin position="223"/>
        <end position="242"/>
    </location>
</feature>
<feature type="compositionally biased region" description="Acidic residues" evidence="2">
    <location>
        <begin position="243"/>
        <end position="256"/>
    </location>
</feature>
<feature type="compositionally biased region" description="Basic and acidic residues" evidence="2">
    <location>
        <begin position="629"/>
        <end position="659"/>
    </location>
</feature>
<proteinExistence type="inferred from homology"/>
<comment type="function">
    <text evidence="1">Acts as a mediator between the cap-binding complex (CBC) and the primary microRNAs (miRNAs) processing machinery. Contributes to the stability and delivery of capped primary miRNA transcripts to the primary miRNA processing complex, thereby playing a role in RNA-mediated gene silencing (RNAi) by miRNAs (By similarity).</text>
</comment>
<comment type="subcellular location">
    <subcellularLocation>
        <location evidence="1">Nucleus</location>
    </subcellularLocation>
</comment>
<comment type="similarity">
    <text evidence="3">Belongs to the ARS2 family.</text>
</comment>